<sequence>MPKVKALQCALALEIRSVTCPGVVLKDKEDIYLSICVFGQYKKTQCVPATFPLVFNARMVFEKVFPEAVDPGDVVAQLEYDTAVFELIQLVPPVGETLSTYDENTRDFMFPGPNQMSGHHDSNRQVTMRRISGLRGIAPKLEFSTTSVITECLISSRKCRTQDKFTYHSAPVEKSHGRLQCRTSRSQKKKSKSPERSKYCINTKNYEQPTISSKSHSPSPYTKRRMCELSEDTRRRLAHLNLGPYEFKKETDKPPFVIRHVDPPSPRTDNFFGSPGRDCERDGWVRMHSDHPHIGCCRSKDYKVIRSPHGRDFEDPFERCEEYLSPRTCSKPQHSARTLLVHSAPSTTPKHCASPVLNRASLRERFHSDWCSPPNCDEIHDRVKDVLKSHQAHARHLCDERDPEREDELELKRSLLYRDSAYDSDPEYSSFQRPRGSFHLDDGECWSNRAASCKGKSHRPVFENSMDKMYRNLYKKACSSVSHTQESF</sequence>
<comment type="function">
    <text evidence="5 6">Required for formation of the sperm connecting piece during spermiogenesis. Sperm connecting piece is essential for linking the developing flagellum to the head during late spermiogenesis (PubMed:12771232, PubMed:25605924). May be involved in myosin-based microfilament transport through interaction with myosin subunits (PubMed:25605924).</text>
</comment>
<comment type="subunit">
    <text evidence="6">Interacts with MYL6.</text>
</comment>
<comment type="subcellular location">
    <subcellularLocation>
        <location evidence="8">Secreted</location>
    </subcellularLocation>
    <subcellularLocation>
        <location evidence="6">Cell projection</location>
        <location evidence="6">Cilium</location>
        <location evidence="6">Flagellum</location>
    </subcellularLocation>
    <text evidence="6">Specifically localizes to the segmented columns and the capitulum of the sperm connecting piece.</text>
</comment>
<comment type="alternative products">
    <event type="alternative splicing"/>
    <isoform>
        <id>Q3U6K5-1</id>
        <name>1</name>
        <sequence type="displayed"/>
    </isoform>
    <isoform>
        <id>Q3U6K5-2</id>
        <name>2</name>
        <sequence type="described" ref="VSP_023278"/>
    </isoform>
    <isoform>
        <id>Q3U6K5-3</id>
        <name>3</name>
        <sequence type="described" ref="VSP_023279 VSP_023280"/>
    </isoform>
</comment>
<comment type="tissue specificity">
    <text evidence="5 6">Specifically expressed in developing spermatids and mature spermatozoa (at protein level) (PubMed:25605924). Isoform 1 is weakly expressed in testis, ovary, thymus and placenta. Isoform 2 and isoform 3 are testis-specific. Expression isw higher in spermatids than in spermatocytes and spermatogonia (PubMed:12771232).</text>
</comment>
<comment type="developmental stage">
    <text evidence="5">Weak expression of isoform 1 is seen throughout testicular development. Isoform 2 and isoform 3 could not be detected until postnatal day 15. Expressed from postnatal day 20, and thereafter increased. Expressed in blastocysts and in embryos from 8.5 dpc-12.5 dpc. After 13.5 dpc, the level of expression decreases. Expressed at 9.5-10.5 dpc in the neural tube, in somites and limb buds.</text>
</comment>
<comment type="disruption phenotype">
    <text evidence="6">Male are sterile due to disruption of sperm connecting piece formation, leading to acephalic spermatozoa in the epididymis and ejaculates.</text>
</comment>
<comment type="similarity">
    <text evidence="8">Belongs to the SPATA6 family.</text>
</comment>
<comment type="caution">
    <text evidence="5 9">Knockout experiments to inactivate Spata6 were first attempted but were unsuccessful, because chimeras did not transmit the targeted allele to their progeny, generating high-percentage of lethality for chimeric embryos (PubMed:12771232). This suggests that genes other than Spata6 may have been targeted or affected in this study (PubMed:25605924).</text>
</comment>
<comment type="sequence caution" evidence="8">
    <conflict type="erroneous initiation">
        <sequence resource="EMBL-CDS" id="AAK20995"/>
    </conflict>
    <text>Truncated N-terminus.</text>
</comment>
<reference key="1">
    <citation type="journal article" date="2003" name="Mol. Hum. Reprod.">
        <title>Characterization, expression pattern and chromosomal localization of the spermatogenesis associated 6 gene (Spata6).</title>
        <authorList>
            <person name="Oh C."/>
            <person name="Aho H."/>
            <person name="Shamsadin R."/>
            <person name="Nayernia K."/>
            <person name="Mueller C."/>
            <person name="Sancken U."/>
            <person name="Szpirer C."/>
            <person name="Engel W."/>
            <person name="Adham I.M."/>
        </authorList>
    </citation>
    <scope>NUCLEOTIDE SEQUENCE [MRNA] (ISOFORM 1)</scope>
    <scope>FUNCTION</scope>
    <scope>ALTERNATIVE SPLICING</scope>
    <scope>TISSUE SPECIFICITY</scope>
    <scope>DEVELOPMENTAL STAGE</scope>
    <source>
        <strain>129/Sv</strain>
    </source>
</reference>
<reference key="2">
    <citation type="journal article" date="2005" name="Science">
        <title>The transcriptional landscape of the mammalian genome.</title>
        <authorList>
            <person name="Carninci P."/>
            <person name="Kasukawa T."/>
            <person name="Katayama S."/>
            <person name="Gough J."/>
            <person name="Frith M.C."/>
            <person name="Maeda N."/>
            <person name="Oyama R."/>
            <person name="Ravasi T."/>
            <person name="Lenhard B."/>
            <person name="Wells C."/>
            <person name="Kodzius R."/>
            <person name="Shimokawa K."/>
            <person name="Bajic V.B."/>
            <person name="Brenner S.E."/>
            <person name="Batalov S."/>
            <person name="Forrest A.R."/>
            <person name="Zavolan M."/>
            <person name="Davis M.J."/>
            <person name="Wilming L.G."/>
            <person name="Aidinis V."/>
            <person name="Allen J.E."/>
            <person name="Ambesi-Impiombato A."/>
            <person name="Apweiler R."/>
            <person name="Aturaliya R.N."/>
            <person name="Bailey T.L."/>
            <person name="Bansal M."/>
            <person name="Baxter L."/>
            <person name="Beisel K.W."/>
            <person name="Bersano T."/>
            <person name="Bono H."/>
            <person name="Chalk A.M."/>
            <person name="Chiu K.P."/>
            <person name="Choudhary V."/>
            <person name="Christoffels A."/>
            <person name="Clutterbuck D.R."/>
            <person name="Crowe M.L."/>
            <person name="Dalla E."/>
            <person name="Dalrymple B.P."/>
            <person name="de Bono B."/>
            <person name="Della Gatta G."/>
            <person name="di Bernardo D."/>
            <person name="Down T."/>
            <person name="Engstrom P."/>
            <person name="Fagiolini M."/>
            <person name="Faulkner G."/>
            <person name="Fletcher C.F."/>
            <person name="Fukushima T."/>
            <person name="Furuno M."/>
            <person name="Futaki S."/>
            <person name="Gariboldi M."/>
            <person name="Georgii-Hemming P."/>
            <person name="Gingeras T.R."/>
            <person name="Gojobori T."/>
            <person name="Green R.E."/>
            <person name="Gustincich S."/>
            <person name="Harbers M."/>
            <person name="Hayashi Y."/>
            <person name="Hensch T.K."/>
            <person name="Hirokawa N."/>
            <person name="Hill D."/>
            <person name="Huminiecki L."/>
            <person name="Iacono M."/>
            <person name="Ikeo K."/>
            <person name="Iwama A."/>
            <person name="Ishikawa T."/>
            <person name="Jakt M."/>
            <person name="Kanapin A."/>
            <person name="Katoh M."/>
            <person name="Kawasawa Y."/>
            <person name="Kelso J."/>
            <person name="Kitamura H."/>
            <person name="Kitano H."/>
            <person name="Kollias G."/>
            <person name="Krishnan S.P."/>
            <person name="Kruger A."/>
            <person name="Kummerfeld S.K."/>
            <person name="Kurochkin I.V."/>
            <person name="Lareau L.F."/>
            <person name="Lazarevic D."/>
            <person name="Lipovich L."/>
            <person name="Liu J."/>
            <person name="Liuni S."/>
            <person name="McWilliam S."/>
            <person name="Madan Babu M."/>
            <person name="Madera M."/>
            <person name="Marchionni L."/>
            <person name="Matsuda H."/>
            <person name="Matsuzawa S."/>
            <person name="Miki H."/>
            <person name="Mignone F."/>
            <person name="Miyake S."/>
            <person name="Morris K."/>
            <person name="Mottagui-Tabar S."/>
            <person name="Mulder N."/>
            <person name="Nakano N."/>
            <person name="Nakauchi H."/>
            <person name="Ng P."/>
            <person name="Nilsson R."/>
            <person name="Nishiguchi S."/>
            <person name="Nishikawa S."/>
            <person name="Nori F."/>
            <person name="Ohara O."/>
            <person name="Okazaki Y."/>
            <person name="Orlando V."/>
            <person name="Pang K.C."/>
            <person name="Pavan W.J."/>
            <person name="Pavesi G."/>
            <person name="Pesole G."/>
            <person name="Petrovsky N."/>
            <person name="Piazza S."/>
            <person name="Reed J."/>
            <person name="Reid J.F."/>
            <person name="Ring B.Z."/>
            <person name="Ringwald M."/>
            <person name="Rost B."/>
            <person name="Ruan Y."/>
            <person name="Salzberg S.L."/>
            <person name="Sandelin A."/>
            <person name="Schneider C."/>
            <person name="Schoenbach C."/>
            <person name="Sekiguchi K."/>
            <person name="Semple C.A."/>
            <person name="Seno S."/>
            <person name="Sessa L."/>
            <person name="Sheng Y."/>
            <person name="Shibata Y."/>
            <person name="Shimada H."/>
            <person name="Shimada K."/>
            <person name="Silva D."/>
            <person name="Sinclair B."/>
            <person name="Sperling S."/>
            <person name="Stupka E."/>
            <person name="Sugiura K."/>
            <person name="Sultana R."/>
            <person name="Takenaka Y."/>
            <person name="Taki K."/>
            <person name="Tammoja K."/>
            <person name="Tan S.L."/>
            <person name="Tang S."/>
            <person name="Taylor M.S."/>
            <person name="Tegner J."/>
            <person name="Teichmann S.A."/>
            <person name="Ueda H.R."/>
            <person name="van Nimwegen E."/>
            <person name="Verardo R."/>
            <person name="Wei C.L."/>
            <person name="Yagi K."/>
            <person name="Yamanishi H."/>
            <person name="Zabarovsky E."/>
            <person name="Zhu S."/>
            <person name="Zimmer A."/>
            <person name="Hide W."/>
            <person name="Bult C."/>
            <person name="Grimmond S.M."/>
            <person name="Teasdale R.D."/>
            <person name="Liu E.T."/>
            <person name="Brusic V."/>
            <person name="Quackenbush J."/>
            <person name="Wahlestedt C."/>
            <person name="Mattick J.S."/>
            <person name="Hume D.A."/>
            <person name="Kai C."/>
            <person name="Sasaki D."/>
            <person name="Tomaru Y."/>
            <person name="Fukuda S."/>
            <person name="Kanamori-Katayama M."/>
            <person name="Suzuki M."/>
            <person name="Aoki J."/>
            <person name="Arakawa T."/>
            <person name="Iida J."/>
            <person name="Imamura K."/>
            <person name="Itoh M."/>
            <person name="Kato T."/>
            <person name="Kawaji H."/>
            <person name="Kawagashira N."/>
            <person name="Kawashima T."/>
            <person name="Kojima M."/>
            <person name="Kondo S."/>
            <person name="Konno H."/>
            <person name="Nakano K."/>
            <person name="Ninomiya N."/>
            <person name="Nishio T."/>
            <person name="Okada M."/>
            <person name="Plessy C."/>
            <person name="Shibata K."/>
            <person name="Shiraki T."/>
            <person name="Suzuki S."/>
            <person name="Tagami M."/>
            <person name="Waki K."/>
            <person name="Watahiki A."/>
            <person name="Okamura-Oho Y."/>
            <person name="Suzuki H."/>
            <person name="Kawai J."/>
            <person name="Hayashizaki Y."/>
        </authorList>
    </citation>
    <scope>NUCLEOTIDE SEQUENCE [LARGE SCALE MRNA] (ISOFORMS 1; 2 AND 3)</scope>
    <source>
        <strain>C57BL/6J</strain>
        <tissue>Bone marrow</tissue>
        <tissue>Lung</tissue>
        <tissue>Testis</tissue>
    </source>
</reference>
<reference key="3">
    <citation type="journal article" date="2009" name="PLoS Biol.">
        <title>Lineage-specific biology revealed by a finished genome assembly of the mouse.</title>
        <authorList>
            <person name="Church D.M."/>
            <person name="Goodstadt L."/>
            <person name="Hillier L.W."/>
            <person name="Zody M.C."/>
            <person name="Goldstein S."/>
            <person name="She X."/>
            <person name="Bult C.J."/>
            <person name="Agarwala R."/>
            <person name="Cherry J.L."/>
            <person name="DiCuccio M."/>
            <person name="Hlavina W."/>
            <person name="Kapustin Y."/>
            <person name="Meric P."/>
            <person name="Maglott D."/>
            <person name="Birtle Z."/>
            <person name="Marques A.C."/>
            <person name="Graves T."/>
            <person name="Zhou S."/>
            <person name="Teague B."/>
            <person name="Potamousis K."/>
            <person name="Churas C."/>
            <person name="Place M."/>
            <person name="Herschleb J."/>
            <person name="Runnheim R."/>
            <person name="Forrest D."/>
            <person name="Amos-Landgraf J."/>
            <person name="Schwartz D.C."/>
            <person name="Cheng Z."/>
            <person name="Lindblad-Toh K."/>
            <person name="Eichler E.E."/>
            <person name="Ponting C.P."/>
        </authorList>
    </citation>
    <scope>NUCLEOTIDE SEQUENCE [LARGE SCALE GENOMIC DNA]</scope>
    <source>
        <strain>C57BL/6J</strain>
    </source>
</reference>
<reference key="4">
    <citation type="journal article" date="2010" name="Cell">
        <title>A tissue-specific atlas of mouse protein phosphorylation and expression.</title>
        <authorList>
            <person name="Huttlin E.L."/>
            <person name="Jedrychowski M.P."/>
            <person name="Elias J.E."/>
            <person name="Goswami T."/>
            <person name="Rad R."/>
            <person name="Beausoleil S.A."/>
            <person name="Villen J."/>
            <person name="Haas W."/>
            <person name="Sowa M.E."/>
            <person name="Gygi S.P."/>
        </authorList>
    </citation>
    <scope>PHOSPHORYLATION [LARGE SCALE ANALYSIS] AT SER-354</scope>
    <scope>IDENTIFICATION BY MASS SPECTROMETRY [LARGE SCALE ANALYSIS]</scope>
    <source>
        <tissue>Testis</tissue>
    </source>
</reference>
<reference key="5">
    <citation type="journal article" date="2015" name="Proc. Natl. Acad. Sci. U.S.A.">
        <title>Spata6 is required for normal assembly of the sperm connecting piece and tight head-tail conjunction.</title>
        <authorList>
            <person name="Yuan S."/>
            <person name="Stratton C.J."/>
            <person name="Bao J."/>
            <person name="Zheng H."/>
            <person name="Bhetwal B.P."/>
            <person name="Yanagimachi R."/>
            <person name="Yan W."/>
        </authorList>
    </citation>
    <scope>FUNCTION</scope>
    <scope>SUBCELLULAR LOCATION</scope>
    <scope>DISRUPTION PHENOTYPE</scope>
    <scope>TISSUE SPECIFICITY</scope>
    <scope>INTERACTION WITH MYL6</scope>
</reference>
<accession>Q3U6K5</accession>
<accession>A2AED7</accession>
<accession>Q3V104</accession>
<accession>Q8BW97</accession>
<accession>Q99MU6</accession>
<accession>Q9D9J1</accession>
<accession>Q9DAI3</accession>
<evidence type="ECO:0000250" key="1">
    <source>
        <dbReference type="UniProtKB" id="Q99MU5"/>
    </source>
</evidence>
<evidence type="ECO:0000250" key="2">
    <source>
        <dbReference type="UniProtKB" id="Q9NWH7"/>
    </source>
</evidence>
<evidence type="ECO:0000255" key="3"/>
<evidence type="ECO:0000256" key="4">
    <source>
        <dbReference type="SAM" id="MobiDB-lite"/>
    </source>
</evidence>
<evidence type="ECO:0000269" key="5">
    <source>
    </source>
</evidence>
<evidence type="ECO:0000269" key="6">
    <source>
    </source>
</evidence>
<evidence type="ECO:0000303" key="7">
    <source>
    </source>
</evidence>
<evidence type="ECO:0000305" key="8"/>
<evidence type="ECO:0000305" key="9">
    <source>
    </source>
</evidence>
<evidence type="ECO:0000312" key="10">
    <source>
        <dbReference type="MGI" id="MGI:1915196"/>
    </source>
</evidence>
<evidence type="ECO:0007744" key="11">
    <source>
    </source>
</evidence>
<gene>
    <name evidence="10" type="primary">Spata6</name>
    <name type="synonym">Hash</name>
</gene>
<feature type="signal peptide" evidence="3">
    <location>
        <begin position="1"/>
        <end position="17"/>
    </location>
</feature>
<feature type="chain" id="PRO_0000278442" description="Spermatogenesis-associated protein 6">
    <location>
        <begin position="18"/>
        <end position="488"/>
    </location>
</feature>
<feature type="region of interest" description="Disordered" evidence="4">
    <location>
        <begin position="176"/>
        <end position="225"/>
    </location>
</feature>
<feature type="compositionally biased region" description="Polar residues" evidence="4">
    <location>
        <begin position="200"/>
        <end position="220"/>
    </location>
</feature>
<feature type="modified residue" description="Phosphoserine" evidence="2">
    <location>
        <position position="217"/>
    </location>
</feature>
<feature type="modified residue" description="Phosphoserine" evidence="2">
    <location>
        <position position="219"/>
    </location>
</feature>
<feature type="modified residue" description="Phosphoserine" evidence="1">
    <location>
        <position position="265"/>
    </location>
</feature>
<feature type="modified residue" description="Phosphoserine" evidence="1">
    <location>
        <position position="274"/>
    </location>
</feature>
<feature type="modified residue" description="Phosphoserine" evidence="1">
    <location>
        <position position="325"/>
    </location>
</feature>
<feature type="modified residue" description="Phosphoserine" evidence="1">
    <location>
        <position position="343"/>
    </location>
</feature>
<feature type="modified residue" description="Phosphoserine" evidence="1">
    <location>
        <position position="346"/>
    </location>
</feature>
<feature type="modified residue" description="Phosphoserine" evidence="11">
    <location>
        <position position="354"/>
    </location>
</feature>
<feature type="modified residue" description="Phosphoserine" evidence="1">
    <location>
        <position position="424"/>
    </location>
</feature>
<feature type="modified residue" description="Phosphoserine" evidence="1">
    <location>
        <position position="465"/>
    </location>
</feature>
<feature type="modified residue" description="Phosphoserine" evidence="1">
    <location>
        <position position="487"/>
    </location>
</feature>
<feature type="cross-link" description="Glycyl lysine isopeptide (Lys-Gly) (interchain with G-Cter in SUMO2)" evidence="2">
    <location>
        <position position="248"/>
    </location>
</feature>
<feature type="splice variant" id="VSP_023278" description="In isoform 2." evidence="7">
    <location>
        <begin position="1"/>
        <end position="225"/>
    </location>
</feature>
<feature type="splice variant" id="VSP_023279" description="In isoform 3." evidence="7">
    <original>DKFTYHSAPVEKSH</original>
    <variation>EASKNLCGSRMTHL</variation>
    <location>
        <begin position="163"/>
        <end position="176"/>
    </location>
</feature>
<feature type="splice variant" id="VSP_023280" description="In isoform 3." evidence="7">
    <location>
        <begin position="177"/>
        <end position="488"/>
    </location>
</feature>
<feature type="sequence conflict" description="In Ref. 2; BAE31719." evidence="8" ref="2">
    <original>I</original>
    <variation>V</variation>
    <location>
        <position position="154"/>
    </location>
</feature>
<feature type="sequence conflict" description="In Ref. 2; BAE31719." evidence="8" ref="2">
    <original>H</original>
    <variation>R</variation>
    <location>
        <position position="291"/>
    </location>
</feature>
<feature type="sequence conflict" description="In Ref. 2; BAE21349." evidence="8" ref="2">
    <original>C</original>
    <variation>S</variation>
    <location>
        <position position="320"/>
    </location>
</feature>
<feature type="sequence conflict" description="In Ref. 2; BAE21349." evidence="8" ref="2">
    <original>H</original>
    <variation>Q</variation>
    <location>
        <position position="351"/>
    </location>
</feature>
<feature type="sequence conflict" description="In Ref. 2; BAB24768." evidence="8" ref="2">
    <original>Y</original>
    <variation>C</variation>
    <location>
        <position position="428"/>
    </location>
</feature>
<protein>
    <recommendedName>
        <fullName evidence="8">Spermatogenesis-associated protein 6</fullName>
    </recommendedName>
    <alternativeName>
        <fullName>Kinesin-related protein</fullName>
    </alternativeName>
</protein>
<proteinExistence type="evidence at protein level"/>
<name>SPAT6_MOUSE</name>
<keyword id="KW-0025">Alternative splicing</keyword>
<keyword id="KW-0966">Cell projection</keyword>
<keyword id="KW-0969">Cilium</keyword>
<keyword id="KW-0217">Developmental protein</keyword>
<keyword id="KW-0221">Differentiation</keyword>
<keyword id="KW-0282">Flagellum</keyword>
<keyword id="KW-1017">Isopeptide bond</keyword>
<keyword id="KW-0597">Phosphoprotein</keyword>
<keyword id="KW-1185">Reference proteome</keyword>
<keyword id="KW-0964">Secreted</keyword>
<keyword id="KW-0732">Signal</keyword>
<keyword id="KW-0744">Spermatogenesis</keyword>
<keyword id="KW-0832">Ubl conjugation</keyword>
<organism>
    <name type="scientific">Mus musculus</name>
    <name type="common">Mouse</name>
    <dbReference type="NCBI Taxonomy" id="10090"/>
    <lineage>
        <taxon>Eukaryota</taxon>
        <taxon>Metazoa</taxon>
        <taxon>Chordata</taxon>
        <taxon>Craniata</taxon>
        <taxon>Vertebrata</taxon>
        <taxon>Euteleostomi</taxon>
        <taxon>Mammalia</taxon>
        <taxon>Eutheria</taxon>
        <taxon>Euarchontoglires</taxon>
        <taxon>Glires</taxon>
        <taxon>Rodentia</taxon>
        <taxon>Myomorpha</taxon>
        <taxon>Muroidea</taxon>
        <taxon>Muridae</taxon>
        <taxon>Murinae</taxon>
        <taxon>Mus</taxon>
        <taxon>Mus</taxon>
    </lineage>
</organism>
<dbReference type="EMBL" id="AF291465">
    <property type="protein sequence ID" value="AAK20995.1"/>
    <property type="status" value="ALT_INIT"/>
    <property type="molecule type" value="mRNA"/>
</dbReference>
<dbReference type="EMBL" id="AK053170">
    <property type="protein sequence ID" value="BAC35292.1"/>
    <property type="molecule type" value="mRNA"/>
</dbReference>
<dbReference type="EMBL" id="AK005819">
    <property type="protein sequence ID" value="BAB24255.1"/>
    <property type="molecule type" value="mRNA"/>
</dbReference>
<dbReference type="EMBL" id="AK006861">
    <property type="protein sequence ID" value="BAB24768.1"/>
    <property type="molecule type" value="mRNA"/>
</dbReference>
<dbReference type="EMBL" id="AK132771">
    <property type="protein sequence ID" value="BAE21349.1"/>
    <property type="molecule type" value="mRNA"/>
</dbReference>
<dbReference type="EMBL" id="AK153098">
    <property type="protein sequence ID" value="BAE31719.1"/>
    <property type="molecule type" value="mRNA"/>
</dbReference>
<dbReference type="EMBL" id="AL627076">
    <property type="status" value="NOT_ANNOTATED_CDS"/>
    <property type="molecule type" value="Genomic_DNA"/>
</dbReference>
<dbReference type="EMBL" id="AL671895">
    <property type="status" value="NOT_ANNOTATED_CDS"/>
    <property type="molecule type" value="Genomic_DNA"/>
</dbReference>
<dbReference type="CCDS" id="CCDS38836.1">
    <molecule id="Q3U6K5-1"/>
</dbReference>
<dbReference type="RefSeq" id="NP_001344160.1">
    <molecule id="Q3U6K5-2"/>
    <property type="nucleotide sequence ID" value="NM_001357231.1"/>
</dbReference>
<dbReference type="RefSeq" id="NP_080746.3">
    <molecule id="Q3U6K5-1"/>
    <property type="nucleotide sequence ID" value="NM_026470.3"/>
</dbReference>
<dbReference type="RefSeq" id="XP_006503412.1">
    <property type="nucleotide sequence ID" value="XM_006503349.3"/>
</dbReference>
<dbReference type="BioGRID" id="212558">
    <property type="interactions" value="1"/>
</dbReference>
<dbReference type="FunCoup" id="Q3U6K5">
    <property type="interactions" value="111"/>
</dbReference>
<dbReference type="STRING" id="10090.ENSMUSP00000036964"/>
<dbReference type="iPTMnet" id="Q3U6K5"/>
<dbReference type="PhosphoSitePlus" id="Q3U6K5"/>
<dbReference type="SwissPalm" id="Q3U6K5"/>
<dbReference type="jPOST" id="Q3U6K5"/>
<dbReference type="PaxDb" id="10090-ENSMUSP00000036964"/>
<dbReference type="ProteomicsDB" id="257337">
    <molecule id="Q3U6K5-1"/>
</dbReference>
<dbReference type="ProteomicsDB" id="257338">
    <molecule id="Q3U6K5-2"/>
</dbReference>
<dbReference type="ProteomicsDB" id="257339">
    <molecule id="Q3U6K5-3"/>
</dbReference>
<dbReference type="Antibodypedia" id="32902">
    <property type="antibodies" value="85 antibodies from 24 providers"/>
</dbReference>
<dbReference type="DNASU" id="67946"/>
<dbReference type="Ensembl" id="ENSMUST00000038868.14">
    <molecule id="Q3U6K5-1"/>
    <property type="protein sequence ID" value="ENSMUSP00000036964.8"/>
    <property type="gene ID" value="ENSMUSG00000034401.17"/>
</dbReference>
<dbReference type="Ensembl" id="ENSMUST00000153746.8">
    <molecule id="Q3U6K5-3"/>
    <property type="protein sequence ID" value="ENSMUSP00000114610.2"/>
    <property type="gene ID" value="ENSMUSG00000034401.17"/>
</dbReference>
<dbReference type="GeneID" id="67946"/>
<dbReference type="KEGG" id="mmu:67946"/>
<dbReference type="UCSC" id="uc008udg.1">
    <molecule id="Q3U6K5-1"/>
    <property type="organism name" value="mouse"/>
</dbReference>
<dbReference type="AGR" id="MGI:1915196"/>
<dbReference type="CTD" id="54558"/>
<dbReference type="MGI" id="MGI:1915196">
    <property type="gene designation" value="Spata6"/>
</dbReference>
<dbReference type="VEuPathDB" id="HostDB:ENSMUSG00000034401"/>
<dbReference type="eggNOG" id="ENOG502QRV3">
    <property type="taxonomic scope" value="Eukaryota"/>
</dbReference>
<dbReference type="GeneTree" id="ENSGT00530000063821"/>
<dbReference type="HOGENOM" id="CLU_096689_1_0_1"/>
<dbReference type="InParanoid" id="Q3U6K5"/>
<dbReference type="OMA" id="HGREFDD"/>
<dbReference type="OrthoDB" id="5963614at2759"/>
<dbReference type="PhylomeDB" id="Q3U6K5"/>
<dbReference type="TreeFam" id="TF328520"/>
<dbReference type="BioGRID-ORCS" id="67946">
    <property type="hits" value="1 hit in 77 CRISPR screens"/>
</dbReference>
<dbReference type="ChiTaRS" id="Spata6">
    <property type="organism name" value="mouse"/>
</dbReference>
<dbReference type="PRO" id="PR:Q3U6K5"/>
<dbReference type="Proteomes" id="UP000000589">
    <property type="component" value="Chromosome 4"/>
</dbReference>
<dbReference type="RNAct" id="Q3U6K5">
    <property type="molecule type" value="protein"/>
</dbReference>
<dbReference type="Bgee" id="ENSMUSG00000034401">
    <property type="expression patterns" value="Expressed in seminiferous tubule of testis and 186 other cell types or tissues"/>
</dbReference>
<dbReference type="ExpressionAtlas" id="Q3U6K5">
    <property type="expression patterns" value="baseline and differential"/>
</dbReference>
<dbReference type="GO" id="GO:0005576">
    <property type="term" value="C:extracellular region"/>
    <property type="evidence" value="ECO:0007669"/>
    <property type="project" value="UniProtKB-SubCell"/>
</dbReference>
<dbReference type="GO" id="GO:0031514">
    <property type="term" value="C:motile cilium"/>
    <property type="evidence" value="ECO:0007669"/>
    <property type="project" value="UniProtKB-SubCell"/>
</dbReference>
<dbReference type="GO" id="GO:0120212">
    <property type="term" value="C:sperm head-tail coupling apparatus"/>
    <property type="evidence" value="ECO:0000314"/>
    <property type="project" value="UniProtKB"/>
</dbReference>
<dbReference type="GO" id="GO:0032027">
    <property type="term" value="F:myosin light chain binding"/>
    <property type="evidence" value="ECO:0000353"/>
    <property type="project" value="UniProtKB"/>
</dbReference>
<dbReference type="GO" id="GO:0030154">
    <property type="term" value="P:cell differentiation"/>
    <property type="evidence" value="ECO:0007669"/>
    <property type="project" value="UniProtKB-KW"/>
</dbReference>
<dbReference type="GO" id="GO:0044458">
    <property type="term" value="P:motile cilium assembly"/>
    <property type="evidence" value="ECO:0000315"/>
    <property type="project" value="UniProtKB"/>
</dbReference>
<dbReference type="GO" id="GO:0007283">
    <property type="term" value="P:spermatogenesis"/>
    <property type="evidence" value="ECO:0000315"/>
    <property type="project" value="UniProtKB"/>
</dbReference>
<dbReference type="InterPro" id="IPR042769">
    <property type="entry name" value="SPATA6_fam"/>
</dbReference>
<dbReference type="InterPro" id="IPR032732">
    <property type="entry name" value="SPATA6_N"/>
</dbReference>
<dbReference type="PANTHER" id="PTHR16435:SF3">
    <property type="entry name" value="SPERMATOGENESIS-ASSOCIATED PROTEIN 6"/>
    <property type="match status" value="1"/>
</dbReference>
<dbReference type="PANTHER" id="PTHR16435">
    <property type="entry name" value="SPERMATOGENESIS-ASSOCIATED PROTEIN 6 SPATA6"/>
    <property type="match status" value="1"/>
</dbReference>
<dbReference type="Pfam" id="PF14909">
    <property type="entry name" value="SPATA6"/>
    <property type="match status" value="1"/>
</dbReference>